<organism>
    <name type="scientific">Thermoplasma acidophilum (strain ATCC 25905 / DSM 1728 / JCM 9062 / NBRC 15155 / AMRC-C165)</name>
    <dbReference type="NCBI Taxonomy" id="273075"/>
    <lineage>
        <taxon>Archaea</taxon>
        <taxon>Methanobacteriati</taxon>
        <taxon>Thermoplasmatota</taxon>
        <taxon>Thermoplasmata</taxon>
        <taxon>Thermoplasmatales</taxon>
        <taxon>Thermoplasmataceae</taxon>
        <taxon>Thermoplasma</taxon>
    </lineage>
</organism>
<accession>Q9HIY2</accession>
<sequence length="328" mass="37722">MITVVGGTFSKLHKGHKALLNTAIDTGNEVVIGLTSDEYVKKNKVYPAIPYSVRYRTLYNYMIKRTNKFRIRQIDDRNGNAPYEKDYEVIVVSPETYPRSLKINEIRISNGLPPLKIIRVPYVLAQDLFPISSTRIINGEIDTNGKRITPLKVGISTRNEAKIQAVEKFVRRLVKNYQIVKNENYNLKTQQPFGEETMELATQRAMEALKDNDYSVGIESGIIYESFSKKYYDVHYCVVIDRFGNVTRGMSSGFEIPDHIVDRMKRDRTFSEAYSGYLNVQEIDQSEGIIGKISEGKLRRIDLIEESIRNAFILRLDPDFYDSTYTPP</sequence>
<feature type="chain" id="PRO_0000156329" description="Bifunctional phosphopantetheine adenylyltransferase/NTP phosphatase">
    <location>
        <begin position="1"/>
        <end position="328"/>
    </location>
</feature>
<feature type="region of interest" description="Phosphopantetheine adenylyltransferase">
    <location>
        <begin position="1"/>
        <end position="152"/>
    </location>
</feature>
<feature type="region of interest" description="Inosine/xanthosine triphosphatase">
    <location>
        <begin position="153"/>
        <end position="328"/>
    </location>
</feature>
<name>COPP_THEAC</name>
<gene>
    <name type="primary">coaD</name>
    <name type="ordered locus">Ta1194</name>
</gene>
<reference key="1">
    <citation type="journal article" date="2000" name="Nature">
        <title>The genome sequence of the thermoacidophilic scavenger Thermoplasma acidophilum.</title>
        <authorList>
            <person name="Ruepp A."/>
            <person name="Graml W."/>
            <person name="Santos-Martinez M.-L."/>
            <person name="Koretke K.K."/>
            <person name="Volker C."/>
            <person name="Mewes H.-W."/>
            <person name="Frishman D."/>
            <person name="Stocker S."/>
            <person name="Lupas A.N."/>
            <person name="Baumeister W."/>
        </authorList>
    </citation>
    <scope>NUCLEOTIDE SEQUENCE [LARGE SCALE GENOMIC DNA]</scope>
    <source>
        <strain>ATCC 25905 / DSM 1728 / JCM 9062 / NBRC 15155 / AMRC-C165</strain>
    </source>
</reference>
<proteinExistence type="inferred from homology"/>
<protein>
    <recommendedName>
        <fullName>Bifunctional phosphopantetheine adenylyltransferase/NTP phosphatase</fullName>
    </recommendedName>
    <domain>
        <recommendedName>
            <fullName>Phosphopantetheine adenylyltransferase</fullName>
            <ecNumber>2.7.7.3</ecNumber>
        </recommendedName>
        <alternativeName>
            <fullName>Dephospho-CoA pyrophosphorylase</fullName>
        </alternativeName>
        <alternativeName>
            <fullName>Pantetheine-phosphate adenylyltransferase</fullName>
            <shortName>PPAT</shortName>
        </alternativeName>
    </domain>
    <domain>
        <recommendedName>
            <fullName evidence="2">Probable inosine/xanthosine triphosphatase</fullName>
            <ecNumber evidence="2">3.6.1.73</ecNumber>
        </recommendedName>
        <alternativeName>
            <fullName evidence="2">Non-canonical purine NTP phosphatase</fullName>
        </alternativeName>
        <alternativeName>
            <fullName evidence="2">Nucleoside-triphosphate phosphatase</fullName>
            <shortName evidence="2">NTPase</shortName>
        </alternativeName>
    </domain>
</protein>
<dbReference type="EC" id="2.7.7.3"/>
<dbReference type="EC" id="3.6.1.73" evidence="2"/>
<dbReference type="EMBL" id="AL445066">
    <property type="protein sequence ID" value="CAC12319.1"/>
    <property type="molecule type" value="Genomic_DNA"/>
</dbReference>
<dbReference type="RefSeq" id="WP_010901601.1">
    <property type="nucleotide sequence ID" value="NC_002578.1"/>
</dbReference>
<dbReference type="SMR" id="Q9HIY2"/>
<dbReference type="STRING" id="273075.gene:9572417"/>
<dbReference type="PaxDb" id="273075-Ta1194"/>
<dbReference type="EnsemblBacteria" id="CAC12319">
    <property type="protein sequence ID" value="CAC12319"/>
    <property type="gene ID" value="CAC12319"/>
</dbReference>
<dbReference type="KEGG" id="tac:Ta1194"/>
<dbReference type="eggNOG" id="arCOG01221">
    <property type="taxonomic scope" value="Archaea"/>
</dbReference>
<dbReference type="HOGENOM" id="CLU_887399_0_0_2"/>
<dbReference type="InParanoid" id="Q9HIY2"/>
<dbReference type="OrthoDB" id="53228at2157"/>
<dbReference type="UniPathway" id="UPA00241"/>
<dbReference type="Proteomes" id="UP000001024">
    <property type="component" value="Chromosome"/>
</dbReference>
<dbReference type="GO" id="GO:0005737">
    <property type="term" value="C:cytoplasm"/>
    <property type="evidence" value="ECO:0007669"/>
    <property type="project" value="UniProtKB-SubCell"/>
</dbReference>
<dbReference type="GO" id="GO:0005524">
    <property type="term" value="F:ATP binding"/>
    <property type="evidence" value="ECO:0007669"/>
    <property type="project" value="UniProtKB-KW"/>
</dbReference>
<dbReference type="GO" id="GO:0103023">
    <property type="term" value="F:ITPase activity"/>
    <property type="evidence" value="ECO:0007669"/>
    <property type="project" value="UniProtKB-EC"/>
</dbReference>
<dbReference type="GO" id="GO:0046872">
    <property type="term" value="F:metal ion binding"/>
    <property type="evidence" value="ECO:0007669"/>
    <property type="project" value="UniProtKB-KW"/>
</dbReference>
<dbReference type="GO" id="GO:0004595">
    <property type="term" value="F:pantetheine-phosphate adenylyltransferase activity"/>
    <property type="evidence" value="ECO:0007669"/>
    <property type="project" value="UniProtKB-UniRule"/>
</dbReference>
<dbReference type="GO" id="GO:0017111">
    <property type="term" value="F:ribonucleoside triphosphate phosphatase activity"/>
    <property type="evidence" value="ECO:0000250"/>
    <property type="project" value="UniProtKB"/>
</dbReference>
<dbReference type="GO" id="GO:0015937">
    <property type="term" value="P:coenzyme A biosynthetic process"/>
    <property type="evidence" value="ECO:0007669"/>
    <property type="project" value="UniProtKB-UniRule"/>
</dbReference>
<dbReference type="GO" id="GO:0009117">
    <property type="term" value="P:nucleotide metabolic process"/>
    <property type="evidence" value="ECO:0007669"/>
    <property type="project" value="UniProtKB-KW"/>
</dbReference>
<dbReference type="GO" id="GO:0006772">
    <property type="term" value="P:thiamine metabolic process"/>
    <property type="evidence" value="ECO:0007669"/>
    <property type="project" value="TreeGrafter"/>
</dbReference>
<dbReference type="CDD" id="cd02164">
    <property type="entry name" value="PPAT_CoAS"/>
    <property type="match status" value="1"/>
</dbReference>
<dbReference type="FunFam" id="3.90.950.10:FF:000030">
    <property type="entry name" value="Bifunctional phosphopantetheine adenylyltransferase/NTP phosphatase"/>
    <property type="match status" value="1"/>
</dbReference>
<dbReference type="FunFam" id="3.40.50.620:FF:000376">
    <property type="entry name" value="Phosphopantetheine adenylyltransferase"/>
    <property type="match status" value="1"/>
</dbReference>
<dbReference type="Gene3D" id="3.90.950.10">
    <property type="match status" value="1"/>
</dbReference>
<dbReference type="Gene3D" id="3.40.50.620">
    <property type="entry name" value="HUPs"/>
    <property type="match status" value="1"/>
</dbReference>
<dbReference type="HAMAP" id="MF_00648">
    <property type="entry name" value="Non_canon_purine_NTPase_YjjX"/>
    <property type="match status" value="1"/>
</dbReference>
<dbReference type="HAMAP" id="MF_00647">
    <property type="entry name" value="PPAT_arch"/>
    <property type="match status" value="1"/>
</dbReference>
<dbReference type="InterPro" id="IPR004821">
    <property type="entry name" value="Cyt_trans-like"/>
</dbReference>
<dbReference type="InterPro" id="IPR029001">
    <property type="entry name" value="ITPase-like_fam"/>
</dbReference>
<dbReference type="InterPro" id="IPR002786">
    <property type="entry name" value="Non_canon_purine_NTPase"/>
</dbReference>
<dbReference type="InterPro" id="IPR026533">
    <property type="entry name" value="NTPase/PRRC1"/>
</dbReference>
<dbReference type="InterPro" id="IPR023540">
    <property type="entry name" value="PPAT_arch"/>
</dbReference>
<dbReference type="InterPro" id="IPR014729">
    <property type="entry name" value="Rossmann-like_a/b/a_fold"/>
</dbReference>
<dbReference type="InterPro" id="IPR050299">
    <property type="entry name" value="YjjX_NTPase"/>
</dbReference>
<dbReference type="NCBIfam" id="TIGR00125">
    <property type="entry name" value="cyt_tran_rel"/>
    <property type="match status" value="1"/>
</dbReference>
<dbReference type="NCBIfam" id="NF001985">
    <property type="entry name" value="PRK00777.1"/>
    <property type="match status" value="1"/>
</dbReference>
<dbReference type="NCBIfam" id="NF002250">
    <property type="entry name" value="PRK01170.1"/>
    <property type="match status" value="1"/>
</dbReference>
<dbReference type="PANTHER" id="PTHR34699">
    <property type="match status" value="1"/>
</dbReference>
<dbReference type="PANTHER" id="PTHR34699:SF2">
    <property type="entry name" value="NON-CANONICAL PURINE NTP PHOSPHATASE_PRRC1 DOMAIN-CONTAINING PROTEIN"/>
    <property type="match status" value="1"/>
</dbReference>
<dbReference type="Pfam" id="PF01467">
    <property type="entry name" value="CTP_transf_like"/>
    <property type="match status" value="1"/>
</dbReference>
<dbReference type="Pfam" id="PF01931">
    <property type="entry name" value="NTPase_I-T"/>
    <property type="match status" value="1"/>
</dbReference>
<dbReference type="SUPFAM" id="SSF52972">
    <property type="entry name" value="ITPase-like"/>
    <property type="match status" value="1"/>
</dbReference>
<dbReference type="SUPFAM" id="SSF52374">
    <property type="entry name" value="Nucleotidylyl transferase"/>
    <property type="match status" value="1"/>
</dbReference>
<comment type="function">
    <text evidence="1">Reversibly transfers an adenylyl group from ATP to 4'-phosphopantetheine, yielding dephospho-CoA (dPCoA) and pyrophosphate.</text>
</comment>
<comment type="function">
    <text evidence="2">Phosphatase that hydrolyzes non-canonical purine nucleotides such as XTP and ITP to their respective diphosphate derivatives. Probably excludes non-canonical purines from DNA/RNA precursor pool, thus preventing their incorporation into DNA/RNA and avoiding chromosomal lesions.</text>
</comment>
<comment type="catalytic activity">
    <reaction>
        <text>(R)-4'-phosphopantetheine + ATP + H(+) = 3'-dephospho-CoA + diphosphate</text>
        <dbReference type="Rhea" id="RHEA:19801"/>
        <dbReference type="ChEBI" id="CHEBI:15378"/>
        <dbReference type="ChEBI" id="CHEBI:30616"/>
        <dbReference type="ChEBI" id="CHEBI:33019"/>
        <dbReference type="ChEBI" id="CHEBI:57328"/>
        <dbReference type="ChEBI" id="CHEBI:61723"/>
        <dbReference type="EC" id="2.7.7.3"/>
    </reaction>
</comment>
<comment type="catalytic activity">
    <reaction evidence="2">
        <text>XTP + H2O = XDP + phosphate + H(+)</text>
        <dbReference type="Rhea" id="RHEA:28406"/>
        <dbReference type="ChEBI" id="CHEBI:15377"/>
        <dbReference type="ChEBI" id="CHEBI:15378"/>
        <dbReference type="ChEBI" id="CHEBI:43474"/>
        <dbReference type="ChEBI" id="CHEBI:59884"/>
        <dbReference type="ChEBI" id="CHEBI:61314"/>
        <dbReference type="EC" id="3.6.1.73"/>
    </reaction>
</comment>
<comment type="catalytic activity">
    <reaction evidence="2">
        <text>ITP + H2O = IDP + phosphate + H(+)</text>
        <dbReference type="Rhea" id="RHEA:28330"/>
        <dbReference type="ChEBI" id="CHEBI:15377"/>
        <dbReference type="ChEBI" id="CHEBI:15378"/>
        <dbReference type="ChEBI" id="CHEBI:43474"/>
        <dbReference type="ChEBI" id="CHEBI:58280"/>
        <dbReference type="ChEBI" id="CHEBI:61402"/>
        <dbReference type="EC" id="3.6.1.73"/>
    </reaction>
</comment>
<comment type="cofactor">
    <cofactor evidence="2">
        <name>Mg(2+)</name>
        <dbReference type="ChEBI" id="CHEBI:18420"/>
    </cofactor>
    <cofactor evidence="2">
        <name>Mn(2+)</name>
        <dbReference type="ChEBI" id="CHEBI:29035"/>
    </cofactor>
    <text evidence="2">Binds 1 divalent metal cation per subunit; can use either Mg(2+) or Mn(2+).</text>
</comment>
<comment type="pathway">
    <text>Cofactor biosynthesis; coenzyme A biosynthesis.</text>
</comment>
<comment type="subcellular location">
    <subcellularLocation>
        <location evidence="1">Cytoplasm</location>
    </subcellularLocation>
</comment>
<comment type="similarity">
    <text evidence="3">In the N-terminal section; belongs to the eukaryotic CoaD family.</text>
</comment>
<comment type="similarity">
    <text evidence="3">In the C-terminal section; belongs to the YjjX NTPase family.</text>
</comment>
<keyword id="KW-0067">ATP-binding</keyword>
<keyword id="KW-0173">Coenzyme A biosynthesis</keyword>
<keyword id="KW-0963">Cytoplasm</keyword>
<keyword id="KW-0378">Hydrolase</keyword>
<keyword id="KW-0460">Magnesium</keyword>
<keyword id="KW-0464">Manganese</keyword>
<keyword id="KW-0479">Metal-binding</keyword>
<keyword id="KW-0511">Multifunctional enzyme</keyword>
<keyword id="KW-0546">Nucleotide metabolism</keyword>
<keyword id="KW-0547">Nucleotide-binding</keyword>
<keyword id="KW-0548">Nucleotidyltransferase</keyword>
<keyword id="KW-1185">Reference proteome</keyword>
<keyword id="KW-0808">Transferase</keyword>
<evidence type="ECO:0000250" key="1"/>
<evidence type="ECO:0000250" key="2">
    <source>
        <dbReference type="UniProtKB" id="P39411"/>
    </source>
</evidence>
<evidence type="ECO:0000305" key="3"/>